<sequence length="272" mass="28757">MVPTMIYSAILALSAFTPSVLAQTRSSGCGKQPSLTNGVHNINGREYILKVPDNYDKNKAHHLVFGLHWRGGNMWNIVDGQSVQPWYGLETRAQGSTIFVAPNGKNAGWANNGGEDIAFIDAIIKQVEGDLCVDQSSRFATGFSWGGGMSYSLACSRAKQFRAVSVLSGGVISGCDGGNDPIAYLGIHGINDGVLPFQGGVNLAQKFVKNNRCQQANVGTPQPGSHGSVRTDFKGCSKPVSFIAYDGGHDAAPLGVGSSLAPDATWKFFMAA</sequence>
<keyword id="KW-0119">Carbohydrate metabolism</keyword>
<keyword id="KW-0378">Hydrolase</keyword>
<keyword id="KW-0624">Polysaccharide degradation</keyword>
<keyword id="KW-1185">Reference proteome</keyword>
<keyword id="KW-0964">Secreted</keyword>
<keyword id="KW-0719">Serine esterase</keyword>
<keyword id="KW-0732">Signal</keyword>
<keyword id="KW-0858">Xylan degradation</keyword>
<comment type="function">
    <text evidence="1">Involved in degradation of plant cell walls. Hydrolyzes the feruloyl-arabinose ester bond in arabinoxylans, and the feruloyl-galactose ester bond in pectin. Active against paranitrophenyl-acetate, methyl ferulate and wheat arabinoxylan (By similarity).</text>
</comment>
<comment type="catalytic activity">
    <reaction>
        <text>feruloyl-polysaccharide + H2O = ferulate + polysaccharide.</text>
        <dbReference type="EC" id="3.1.1.73"/>
    </reaction>
</comment>
<comment type="subcellular location">
    <subcellularLocation>
        <location evidence="1">Secreted</location>
    </subcellularLocation>
</comment>
<comment type="similarity">
    <text evidence="3">Belongs to the faeC family.</text>
</comment>
<evidence type="ECO:0000250" key="1"/>
<evidence type="ECO:0000255" key="2"/>
<evidence type="ECO:0000305" key="3"/>
<organism>
    <name type="scientific">Neosartorya fischeri (strain ATCC 1020 / DSM 3700 / CBS 544.65 / FGSC A1164 / JCM 1740 / NRRL 181 / WB 181)</name>
    <name type="common">Aspergillus fischerianus</name>
    <dbReference type="NCBI Taxonomy" id="331117"/>
    <lineage>
        <taxon>Eukaryota</taxon>
        <taxon>Fungi</taxon>
        <taxon>Dikarya</taxon>
        <taxon>Ascomycota</taxon>
        <taxon>Pezizomycotina</taxon>
        <taxon>Eurotiomycetes</taxon>
        <taxon>Eurotiomycetidae</taxon>
        <taxon>Eurotiales</taxon>
        <taxon>Aspergillaceae</taxon>
        <taxon>Aspergillus</taxon>
        <taxon>Aspergillus subgen. Fumigati</taxon>
    </lineage>
</organism>
<gene>
    <name type="primary">faeC</name>
    <name type="ORF">NFIA_089720</name>
</gene>
<name>FAEC_NEOFI</name>
<dbReference type="EC" id="3.1.1.73"/>
<dbReference type="EMBL" id="DS027696">
    <property type="protein sequence ID" value="EAW19015.1"/>
    <property type="molecule type" value="Genomic_DNA"/>
</dbReference>
<dbReference type="RefSeq" id="XP_001260912.1">
    <property type="nucleotide sequence ID" value="XM_001260911.1"/>
</dbReference>
<dbReference type="SMR" id="A1DI08"/>
<dbReference type="STRING" id="331117.A1DI08"/>
<dbReference type="ESTHER" id="neofi-faec">
    <property type="family name" value="FaeC"/>
</dbReference>
<dbReference type="EnsemblFungi" id="EAW19015">
    <property type="protein sequence ID" value="EAW19015"/>
    <property type="gene ID" value="NFIA_089720"/>
</dbReference>
<dbReference type="GeneID" id="4587470"/>
<dbReference type="KEGG" id="nfi:NFIA_089720"/>
<dbReference type="VEuPathDB" id="FungiDB:NFIA_089720"/>
<dbReference type="eggNOG" id="ENOG502SMEI">
    <property type="taxonomic scope" value="Eukaryota"/>
</dbReference>
<dbReference type="HOGENOM" id="CLU_027551_2_0_1"/>
<dbReference type="OMA" id="IHGINDG"/>
<dbReference type="OrthoDB" id="424610at2759"/>
<dbReference type="Proteomes" id="UP000006702">
    <property type="component" value="Unassembled WGS sequence"/>
</dbReference>
<dbReference type="GO" id="GO:0005576">
    <property type="term" value="C:extracellular region"/>
    <property type="evidence" value="ECO:0007669"/>
    <property type="project" value="UniProtKB-SubCell"/>
</dbReference>
<dbReference type="GO" id="GO:0030600">
    <property type="term" value="F:feruloyl esterase activity"/>
    <property type="evidence" value="ECO:0007669"/>
    <property type="project" value="UniProtKB-EC"/>
</dbReference>
<dbReference type="GO" id="GO:0045493">
    <property type="term" value="P:xylan catabolic process"/>
    <property type="evidence" value="ECO:0007669"/>
    <property type="project" value="UniProtKB-KW"/>
</dbReference>
<dbReference type="Gene3D" id="3.40.50.1820">
    <property type="entry name" value="alpha/beta hydrolase"/>
    <property type="match status" value="1"/>
</dbReference>
<dbReference type="InterPro" id="IPR029058">
    <property type="entry name" value="AB_hydrolase_fold"/>
</dbReference>
<dbReference type="InterPro" id="IPR043595">
    <property type="entry name" value="FaeB/C/D"/>
</dbReference>
<dbReference type="PANTHER" id="PTHR38050">
    <property type="match status" value="1"/>
</dbReference>
<dbReference type="PANTHER" id="PTHR38050:SF1">
    <property type="entry name" value="FERULOYL ESTERASE C"/>
    <property type="match status" value="1"/>
</dbReference>
<dbReference type="SUPFAM" id="SSF53474">
    <property type="entry name" value="alpha/beta-Hydrolases"/>
    <property type="match status" value="1"/>
</dbReference>
<protein>
    <recommendedName>
        <fullName>Probable feruloyl esterase C</fullName>
        <ecNumber>3.1.1.73</ecNumber>
    </recommendedName>
    <alternativeName>
        <fullName>Ferulic acid esterase C</fullName>
    </alternativeName>
</protein>
<reference key="1">
    <citation type="journal article" date="2008" name="PLoS Genet.">
        <title>Genomic islands in the pathogenic filamentous fungus Aspergillus fumigatus.</title>
        <authorList>
            <person name="Fedorova N.D."/>
            <person name="Khaldi N."/>
            <person name="Joardar V.S."/>
            <person name="Maiti R."/>
            <person name="Amedeo P."/>
            <person name="Anderson M.J."/>
            <person name="Crabtree J."/>
            <person name="Silva J.C."/>
            <person name="Badger J.H."/>
            <person name="Albarraq A."/>
            <person name="Angiuoli S."/>
            <person name="Bussey H."/>
            <person name="Bowyer P."/>
            <person name="Cotty P.J."/>
            <person name="Dyer P.S."/>
            <person name="Egan A."/>
            <person name="Galens K."/>
            <person name="Fraser-Liggett C.M."/>
            <person name="Haas B.J."/>
            <person name="Inman J.M."/>
            <person name="Kent R."/>
            <person name="Lemieux S."/>
            <person name="Malavazi I."/>
            <person name="Orvis J."/>
            <person name="Roemer T."/>
            <person name="Ronning C.M."/>
            <person name="Sundaram J.P."/>
            <person name="Sutton G."/>
            <person name="Turner G."/>
            <person name="Venter J.C."/>
            <person name="White O.R."/>
            <person name="Whitty B.R."/>
            <person name="Youngman P."/>
            <person name="Wolfe K.H."/>
            <person name="Goldman G.H."/>
            <person name="Wortman J.R."/>
            <person name="Jiang B."/>
            <person name="Denning D.W."/>
            <person name="Nierman W.C."/>
        </authorList>
    </citation>
    <scope>NUCLEOTIDE SEQUENCE [LARGE SCALE GENOMIC DNA]</scope>
    <source>
        <strain>ATCC 1020 / DSM 3700 / CBS 544.65 / FGSC A1164 / JCM 1740 / NRRL 181 / WB 181</strain>
    </source>
</reference>
<accession>A1DI08</accession>
<proteinExistence type="inferred from homology"/>
<feature type="signal peptide" evidence="2">
    <location>
        <begin position="1"/>
        <end position="22"/>
    </location>
</feature>
<feature type="chain" id="PRO_0000394943" description="Probable feruloyl esterase C">
    <location>
        <begin position="23"/>
        <end position="272"/>
    </location>
</feature>